<name>RSMH1_LACP7</name>
<protein>
    <recommendedName>
        <fullName evidence="1">Ribosomal RNA small subunit methyltransferase H 1</fullName>
        <ecNumber evidence="1">2.1.1.199</ecNumber>
    </recommendedName>
    <alternativeName>
        <fullName evidence="1">16S rRNA m(4)C1402 methyltransferase 1</fullName>
    </alternativeName>
    <alternativeName>
        <fullName evidence="1">rRNA (cytosine-N(4)-)-methyltransferase RsmH 1</fullName>
    </alternativeName>
</protein>
<evidence type="ECO:0000255" key="1">
    <source>
        <dbReference type="HAMAP-Rule" id="MF_01007"/>
    </source>
</evidence>
<evidence type="ECO:0000256" key="2">
    <source>
        <dbReference type="SAM" id="MobiDB-lite"/>
    </source>
</evidence>
<dbReference type="EC" id="2.1.1.199" evidence="1"/>
<dbReference type="EMBL" id="CP000885">
    <property type="protein sequence ID" value="ABX40661.1"/>
    <property type="molecule type" value="Genomic_DNA"/>
</dbReference>
<dbReference type="RefSeq" id="WP_012198304.1">
    <property type="nucleotide sequence ID" value="NC_010001.1"/>
</dbReference>
<dbReference type="SMR" id="A9KS30"/>
<dbReference type="STRING" id="357809.Cphy_0274"/>
<dbReference type="KEGG" id="cpy:Cphy_0274"/>
<dbReference type="eggNOG" id="COG0275">
    <property type="taxonomic scope" value="Bacteria"/>
</dbReference>
<dbReference type="HOGENOM" id="CLU_038422_1_1_9"/>
<dbReference type="OrthoDB" id="9806637at2"/>
<dbReference type="Proteomes" id="UP000000370">
    <property type="component" value="Chromosome"/>
</dbReference>
<dbReference type="GO" id="GO:0005737">
    <property type="term" value="C:cytoplasm"/>
    <property type="evidence" value="ECO:0007669"/>
    <property type="project" value="UniProtKB-SubCell"/>
</dbReference>
<dbReference type="GO" id="GO:0071424">
    <property type="term" value="F:rRNA (cytosine-N4-)-methyltransferase activity"/>
    <property type="evidence" value="ECO:0007669"/>
    <property type="project" value="UniProtKB-UniRule"/>
</dbReference>
<dbReference type="GO" id="GO:0070475">
    <property type="term" value="P:rRNA base methylation"/>
    <property type="evidence" value="ECO:0007669"/>
    <property type="project" value="UniProtKB-UniRule"/>
</dbReference>
<dbReference type="Gene3D" id="1.10.150.170">
    <property type="entry name" value="Putative methyltransferase TM0872, insert domain"/>
    <property type="match status" value="1"/>
</dbReference>
<dbReference type="Gene3D" id="3.40.50.150">
    <property type="entry name" value="Vaccinia Virus protein VP39"/>
    <property type="match status" value="1"/>
</dbReference>
<dbReference type="HAMAP" id="MF_01007">
    <property type="entry name" value="16SrRNA_methyltr_H"/>
    <property type="match status" value="1"/>
</dbReference>
<dbReference type="InterPro" id="IPR002903">
    <property type="entry name" value="RsmH"/>
</dbReference>
<dbReference type="InterPro" id="IPR023397">
    <property type="entry name" value="SAM-dep_MeTrfase_MraW_recog"/>
</dbReference>
<dbReference type="InterPro" id="IPR029063">
    <property type="entry name" value="SAM-dependent_MTases_sf"/>
</dbReference>
<dbReference type="NCBIfam" id="TIGR00006">
    <property type="entry name" value="16S rRNA (cytosine(1402)-N(4))-methyltransferase RsmH"/>
    <property type="match status" value="1"/>
</dbReference>
<dbReference type="PANTHER" id="PTHR11265:SF0">
    <property type="entry name" value="12S RRNA N4-METHYLCYTIDINE METHYLTRANSFERASE"/>
    <property type="match status" value="1"/>
</dbReference>
<dbReference type="PANTHER" id="PTHR11265">
    <property type="entry name" value="S-ADENOSYL-METHYLTRANSFERASE MRAW"/>
    <property type="match status" value="1"/>
</dbReference>
<dbReference type="Pfam" id="PF01795">
    <property type="entry name" value="Methyltransf_5"/>
    <property type="match status" value="1"/>
</dbReference>
<dbReference type="PIRSF" id="PIRSF004486">
    <property type="entry name" value="MraW"/>
    <property type="match status" value="1"/>
</dbReference>
<dbReference type="SUPFAM" id="SSF81799">
    <property type="entry name" value="Putative methyltransferase TM0872, insert domain"/>
    <property type="match status" value="1"/>
</dbReference>
<dbReference type="SUPFAM" id="SSF53335">
    <property type="entry name" value="S-adenosyl-L-methionine-dependent methyltransferases"/>
    <property type="match status" value="1"/>
</dbReference>
<sequence>MADQNINKNEKVLTGQPTENQEPVHKRRERYKGTHPKTFKEKYKERQPEKYADTIEKVIQKGSTPAGMHISICVNEILEFLQIKPGQKGLDATLGYGGHTREMLKCLESQGHMYALDVDPIEIVKTRERLQNLGFGPEILTIKQLNFANIDEVVEEAGLFDFVLADLGVSSMQIDDPDRGFSFKTDGPLDLRLNPEKGISAAERLKTISQTELQGMLLENSDEPYSEEISKAIVNEIKRGNEIDTTTKLRDLISKVLVTIPENEQKEAIKKTCQRTFQALRIDVNNEYEVLYSFLEKLPNVLAKGGRVAILTFHSGEDRLVKKSFKNLQRAGIYSEVSDDVIRPSAEECNRNPRARSTKMRWAIKA</sequence>
<keyword id="KW-0963">Cytoplasm</keyword>
<keyword id="KW-0489">Methyltransferase</keyword>
<keyword id="KW-1185">Reference proteome</keyword>
<keyword id="KW-0698">rRNA processing</keyword>
<keyword id="KW-0949">S-adenosyl-L-methionine</keyword>
<keyword id="KW-0808">Transferase</keyword>
<organism>
    <name type="scientific">Lachnoclostridium phytofermentans (strain ATCC 700394 / DSM 18823 / ISDg)</name>
    <name type="common">Clostridium phytofermentans</name>
    <dbReference type="NCBI Taxonomy" id="357809"/>
    <lineage>
        <taxon>Bacteria</taxon>
        <taxon>Bacillati</taxon>
        <taxon>Bacillota</taxon>
        <taxon>Clostridia</taxon>
        <taxon>Lachnospirales</taxon>
        <taxon>Lachnospiraceae</taxon>
    </lineage>
</organism>
<reference key="1">
    <citation type="submission" date="2007-11" db="EMBL/GenBank/DDBJ databases">
        <title>Complete genome sequence of Clostridium phytofermentans ISDg.</title>
        <authorList>
            <person name="Leschine S.B."/>
            <person name="Warnick T.A."/>
            <person name="Blanchard J.L."/>
            <person name="Schnell D.J."/>
            <person name="Petit E.L."/>
            <person name="LaTouf W.G."/>
            <person name="Copeland A."/>
            <person name="Lucas S."/>
            <person name="Lapidus A."/>
            <person name="Barry K."/>
            <person name="Glavina del Rio T."/>
            <person name="Dalin E."/>
            <person name="Tice H."/>
            <person name="Pitluck S."/>
            <person name="Kiss H."/>
            <person name="Brettin T."/>
            <person name="Bruce D."/>
            <person name="Detter J.C."/>
            <person name="Han C."/>
            <person name="Kuske C."/>
            <person name="Schmutz J."/>
            <person name="Larimer F."/>
            <person name="Land M."/>
            <person name="Hauser L."/>
            <person name="Kyrpides N."/>
            <person name="Kim E.A."/>
            <person name="Richardson P."/>
        </authorList>
    </citation>
    <scope>NUCLEOTIDE SEQUENCE [LARGE SCALE GENOMIC DNA]</scope>
    <source>
        <strain>ATCC 700394 / DSM 18823 / ISDg</strain>
    </source>
</reference>
<comment type="function">
    <text evidence="1">Specifically methylates the N4 position of cytidine in position 1402 (C1402) of 16S rRNA.</text>
</comment>
<comment type="catalytic activity">
    <reaction evidence="1">
        <text>cytidine(1402) in 16S rRNA + S-adenosyl-L-methionine = N(4)-methylcytidine(1402) in 16S rRNA + S-adenosyl-L-homocysteine + H(+)</text>
        <dbReference type="Rhea" id="RHEA:42928"/>
        <dbReference type="Rhea" id="RHEA-COMP:10286"/>
        <dbReference type="Rhea" id="RHEA-COMP:10287"/>
        <dbReference type="ChEBI" id="CHEBI:15378"/>
        <dbReference type="ChEBI" id="CHEBI:57856"/>
        <dbReference type="ChEBI" id="CHEBI:59789"/>
        <dbReference type="ChEBI" id="CHEBI:74506"/>
        <dbReference type="ChEBI" id="CHEBI:82748"/>
        <dbReference type="EC" id="2.1.1.199"/>
    </reaction>
</comment>
<comment type="subcellular location">
    <subcellularLocation>
        <location evidence="1">Cytoplasm</location>
    </subcellularLocation>
</comment>
<comment type="similarity">
    <text evidence="1">Belongs to the methyltransferase superfamily. RsmH family.</text>
</comment>
<proteinExistence type="inferred from homology"/>
<feature type="chain" id="PRO_0000386823" description="Ribosomal RNA small subunit methyltransferase H 1">
    <location>
        <begin position="1"/>
        <end position="366"/>
    </location>
</feature>
<feature type="region of interest" description="Disordered" evidence="2">
    <location>
        <begin position="1"/>
        <end position="46"/>
    </location>
</feature>
<feature type="compositionally biased region" description="Basic residues" evidence="2">
    <location>
        <begin position="25"/>
        <end position="37"/>
    </location>
</feature>
<feature type="binding site" evidence="1">
    <location>
        <begin position="97"/>
        <end position="99"/>
    </location>
    <ligand>
        <name>S-adenosyl-L-methionine</name>
        <dbReference type="ChEBI" id="CHEBI:59789"/>
    </ligand>
</feature>
<feature type="binding site" evidence="1">
    <location>
        <position position="117"/>
    </location>
    <ligand>
        <name>S-adenosyl-L-methionine</name>
        <dbReference type="ChEBI" id="CHEBI:59789"/>
    </ligand>
</feature>
<feature type="binding site" evidence="1">
    <location>
        <position position="147"/>
    </location>
    <ligand>
        <name>S-adenosyl-L-methionine</name>
        <dbReference type="ChEBI" id="CHEBI:59789"/>
    </ligand>
</feature>
<feature type="binding site" evidence="1">
    <location>
        <position position="166"/>
    </location>
    <ligand>
        <name>S-adenosyl-L-methionine</name>
        <dbReference type="ChEBI" id="CHEBI:59789"/>
    </ligand>
</feature>
<feature type="binding site" evidence="1">
    <location>
        <position position="173"/>
    </location>
    <ligand>
        <name>S-adenosyl-L-methionine</name>
        <dbReference type="ChEBI" id="CHEBI:59789"/>
    </ligand>
</feature>
<gene>
    <name evidence="1" type="primary">rsmH1</name>
    <name type="synonym">mraW1</name>
    <name type="ordered locus">Cphy_0274</name>
</gene>
<accession>A9KS30</accession>